<geneLocation type="chloroplast"/>
<comment type="function">
    <text evidence="2">Photosystem II (PSII) is a light-driven water:plastoquinone oxidoreductase that uses light energy to abstract electrons from H(2)O, generating O(2) and a proton gradient subsequently used for ATP formation. It consists of a core antenna complex that captures photons, and an electron transfer chain that converts photonic excitation into a charge separation. The D1/D2 (PsbA/PsbD) reaction center heterodimer binds P680, the primary electron donor of PSII as well as several subsequent electron acceptors. D2 is needed for assembly of a stable PSII complex.</text>
</comment>
<comment type="catalytic activity">
    <reaction evidence="2">
        <text>2 a plastoquinone + 4 hnu + 2 H2O = 2 a plastoquinol + O2</text>
        <dbReference type="Rhea" id="RHEA:36359"/>
        <dbReference type="Rhea" id="RHEA-COMP:9561"/>
        <dbReference type="Rhea" id="RHEA-COMP:9562"/>
        <dbReference type="ChEBI" id="CHEBI:15377"/>
        <dbReference type="ChEBI" id="CHEBI:15379"/>
        <dbReference type="ChEBI" id="CHEBI:17757"/>
        <dbReference type="ChEBI" id="CHEBI:30212"/>
        <dbReference type="ChEBI" id="CHEBI:62192"/>
        <dbReference type="EC" id="1.10.3.9"/>
    </reaction>
</comment>
<comment type="cofactor">
    <text evidence="2">The D1/D2 heterodimer binds P680, chlorophylls that are the primary electron donor of PSII, and subsequent electron acceptors. It shares a non-heme iron and each subunit binds pheophytin, quinone, additional chlorophylls, carotenoids and lipids. There is also a Cl(-1) ion associated with D1 and D2, which is required for oxygen evolution. The PSII complex binds additional chlorophylls, carotenoids and specific lipids.</text>
</comment>
<comment type="subunit">
    <text evidence="2">PSII is composed of 1 copy each of membrane proteins PsbA, PsbB, PsbC, PsbD, PsbE, PsbF, PsbH, PsbI, PsbJ, PsbK, PsbL, PsbM, PsbT, PsbX, PsbY, PsbZ, Psb30/Ycf12, at least 3 peripheral proteins of the oxygen-evolving complex and a large number of cofactors. It forms dimeric complexes.</text>
</comment>
<comment type="subcellular location">
    <subcellularLocation>
        <location evidence="2">Plastid</location>
        <location evidence="2">Chloroplast thylakoid membrane</location>
        <topology evidence="2">Multi-pass membrane protein</topology>
    </subcellularLocation>
</comment>
<comment type="miscellaneous">
    <text evidence="2">2 of the reaction center chlorophylls (ChlD1 and ChlD2) are entirely coordinated by water.</text>
</comment>
<comment type="similarity">
    <text evidence="2">Belongs to the reaction center PufL/M/PsbA/D family.</text>
</comment>
<comment type="sequence caution" evidence="3">
    <conflict type="erroneous initiation">
        <sequence resource="EMBL-CDS" id="AAS46043"/>
    </conflict>
    <text>Extended N-terminus.</text>
</comment>
<organism>
    <name type="scientific">Oryza sativa subsp. indica</name>
    <name type="common">Rice</name>
    <dbReference type="NCBI Taxonomy" id="39946"/>
    <lineage>
        <taxon>Eukaryota</taxon>
        <taxon>Viridiplantae</taxon>
        <taxon>Streptophyta</taxon>
        <taxon>Embryophyta</taxon>
        <taxon>Tracheophyta</taxon>
        <taxon>Spermatophyta</taxon>
        <taxon>Magnoliopsida</taxon>
        <taxon>Liliopsida</taxon>
        <taxon>Poales</taxon>
        <taxon>Poaceae</taxon>
        <taxon>BOP clade</taxon>
        <taxon>Oryzoideae</taxon>
        <taxon>Oryzeae</taxon>
        <taxon>Oryzinae</taxon>
        <taxon>Oryza</taxon>
        <taxon>Oryza sativa</taxon>
    </lineage>
</organism>
<evidence type="ECO:0000250" key="1">
    <source>
        <dbReference type="UniProtKB" id="P56761"/>
    </source>
</evidence>
<evidence type="ECO:0000255" key="2">
    <source>
        <dbReference type="HAMAP-Rule" id="MF_01383"/>
    </source>
</evidence>
<evidence type="ECO:0000305" key="3"/>
<sequence length="353" mass="39573">MTIALGRVTKEENDLFDIMDDWLRRDRFVFVGWSGLLLFPCAYFALGGWFTGTTFVTSWYTHGLASSYLEGCNFLTAAVSTPANSLAHSLLLLWGPEAQGDFTRWCQLGGLWTFVALHGAFALIGFMLRQFELARSVQLRPYNAISFSGPIAVFVSVFLIYPLGQSGWFFAPSFGVAAIFRFILFFQGFHNWTLNPFHMMGVAGVLGAALLCAIHGATVENTLFEDGDGANTFRAFNPTQAEETYSMVTANRFWSQIFGVAFSNKRWLHFFMLFVPVTGLWMSAIGVVGLALNLRAYDFVSQEIRAAEDPEFETFYTKNILLNEGIRAWMAAQDQPHENLIFPEEVLPRGNAL</sequence>
<feature type="initiator methionine" description="Removed" evidence="1">
    <location>
        <position position="1"/>
    </location>
</feature>
<feature type="chain" id="PRO_0000290039" description="Photosystem II D2 protein">
    <location>
        <begin position="2"/>
        <end position="353"/>
    </location>
</feature>
<feature type="transmembrane region" description="Helical" evidence="2">
    <location>
        <begin position="41"/>
        <end position="61"/>
    </location>
</feature>
<feature type="transmembrane region" description="Helical" evidence="2">
    <location>
        <begin position="125"/>
        <end position="141"/>
    </location>
</feature>
<feature type="transmembrane region" description="Helical" evidence="2">
    <location>
        <begin position="153"/>
        <end position="166"/>
    </location>
</feature>
<feature type="transmembrane region" description="Helical" evidence="2">
    <location>
        <begin position="208"/>
        <end position="228"/>
    </location>
</feature>
<feature type="transmembrane region" description="Helical" evidence="2">
    <location>
        <begin position="279"/>
        <end position="295"/>
    </location>
</feature>
<feature type="binding site" description="axial binding residue" evidence="2">
    <location>
        <position position="118"/>
    </location>
    <ligand>
        <name>chlorophyll a</name>
        <dbReference type="ChEBI" id="CHEBI:58416"/>
        <label>ChlzD2</label>
    </ligand>
    <ligandPart>
        <name>Mg</name>
        <dbReference type="ChEBI" id="CHEBI:25107"/>
    </ligandPart>
</feature>
<feature type="binding site" evidence="2">
    <location>
        <position position="130"/>
    </location>
    <ligand>
        <name>pheophytin a</name>
        <dbReference type="ChEBI" id="CHEBI:136840"/>
        <label>D2</label>
    </ligand>
</feature>
<feature type="binding site" evidence="2">
    <location>
        <position position="143"/>
    </location>
    <ligand>
        <name>pheophytin a</name>
        <dbReference type="ChEBI" id="CHEBI:136840"/>
        <label>D2</label>
    </ligand>
</feature>
<feature type="binding site" description="axial binding residue" evidence="2">
    <location>
        <position position="198"/>
    </location>
    <ligand>
        <name>chlorophyll a</name>
        <dbReference type="ChEBI" id="CHEBI:58416"/>
        <label>PD2</label>
    </ligand>
    <ligandPart>
        <name>Mg</name>
        <dbReference type="ChEBI" id="CHEBI:25107"/>
    </ligandPart>
</feature>
<feature type="binding site" evidence="2">
    <location>
        <position position="215"/>
    </location>
    <ligand>
        <name>a plastoquinone</name>
        <dbReference type="ChEBI" id="CHEBI:17757"/>
        <label>Q(A)</label>
    </ligand>
</feature>
<feature type="binding site" evidence="2">
    <location>
        <position position="215"/>
    </location>
    <ligand>
        <name>Fe cation</name>
        <dbReference type="ChEBI" id="CHEBI:24875"/>
        <note>ligand shared with heterodimeric partner</note>
    </ligand>
</feature>
<feature type="binding site" evidence="2">
    <location>
        <position position="262"/>
    </location>
    <ligand>
        <name>a plastoquinone</name>
        <dbReference type="ChEBI" id="CHEBI:17757"/>
        <label>Q(A)</label>
    </ligand>
</feature>
<feature type="binding site" evidence="2">
    <location>
        <position position="269"/>
    </location>
    <ligand>
        <name>Fe cation</name>
        <dbReference type="ChEBI" id="CHEBI:24875"/>
        <note>ligand shared with heterodimeric partner</note>
    </ligand>
</feature>
<feature type="modified residue" description="N-acetylthreonine" evidence="1">
    <location>
        <position position="2"/>
    </location>
</feature>
<feature type="modified residue" description="Phosphothreonine" evidence="1">
    <location>
        <position position="2"/>
    </location>
</feature>
<dbReference type="EC" id="1.10.3.9" evidence="2"/>
<dbReference type="EMBL" id="AY522329">
    <property type="protein sequence ID" value="AAS46043.1"/>
    <property type="status" value="ALT_INIT"/>
    <property type="molecule type" value="Genomic_DNA"/>
</dbReference>
<dbReference type="RefSeq" id="YP_009161349.1">
    <property type="nucleotide sequence ID" value="NC_027678.1"/>
</dbReference>
<dbReference type="RefSeq" id="YP_654203.2">
    <property type="nucleotide sequence ID" value="NC_008155.1"/>
</dbReference>
<dbReference type="SMR" id="P0C436"/>
<dbReference type="STRING" id="39946.P0C436"/>
<dbReference type="GeneID" id="4126919"/>
<dbReference type="Proteomes" id="UP000007015">
    <property type="component" value="Chloroplast"/>
</dbReference>
<dbReference type="GO" id="GO:0009535">
    <property type="term" value="C:chloroplast thylakoid membrane"/>
    <property type="evidence" value="ECO:0007669"/>
    <property type="project" value="UniProtKB-SubCell"/>
</dbReference>
<dbReference type="GO" id="GO:0009523">
    <property type="term" value="C:photosystem II"/>
    <property type="evidence" value="ECO:0007669"/>
    <property type="project" value="UniProtKB-KW"/>
</dbReference>
<dbReference type="GO" id="GO:0009536">
    <property type="term" value="C:plastid"/>
    <property type="evidence" value="ECO:0000305"/>
    <property type="project" value="Gramene"/>
</dbReference>
<dbReference type="GO" id="GO:0016168">
    <property type="term" value="F:chlorophyll binding"/>
    <property type="evidence" value="ECO:0007669"/>
    <property type="project" value="UniProtKB-UniRule"/>
</dbReference>
<dbReference type="GO" id="GO:0045156">
    <property type="term" value="F:electron transporter, transferring electrons within the cyclic electron transport pathway of photosynthesis activity"/>
    <property type="evidence" value="ECO:0007669"/>
    <property type="project" value="InterPro"/>
</dbReference>
<dbReference type="GO" id="GO:0005506">
    <property type="term" value="F:iron ion binding"/>
    <property type="evidence" value="ECO:0007669"/>
    <property type="project" value="UniProtKB-UniRule"/>
</dbReference>
<dbReference type="GO" id="GO:0010242">
    <property type="term" value="F:oxygen evolving activity"/>
    <property type="evidence" value="ECO:0007669"/>
    <property type="project" value="UniProtKB-EC"/>
</dbReference>
<dbReference type="GO" id="GO:0009772">
    <property type="term" value="P:photosynthetic electron transport in photosystem II"/>
    <property type="evidence" value="ECO:0007669"/>
    <property type="project" value="InterPro"/>
</dbReference>
<dbReference type="CDD" id="cd09288">
    <property type="entry name" value="Photosystem-II_D2"/>
    <property type="match status" value="1"/>
</dbReference>
<dbReference type="FunFam" id="1.20.85.10:FF:000001">
    <property type="entry name" value="photosystem II D2 protein-like"/>
    <property type="match status" value="1"/>
</dbReference>
<dbReference type="Gene3D" id="1.20.85.10">
    <property type="entry name" value="Photosystem II protein D1-like"/>
    <property type="match status" value="1"/>
</dbReference>
<dbReference type="HAMAP" id="MF_01383">
    <property type="entry name" value="PSII_PsbD_D2"/>
    <property type="match status" value="1"/>
</dbReference>
<dbReference type="InterPro" id="IPR055266">
    <property type="entry name" value="D1/D2"/>
</dbReference>
<dbReference type="InterPro" id="IPR036854">
    <property type="entry name" value="Photo_II_D1/D2_sf"/>
</dbReference>
<dbReference type="InterPro" id="IPR000484">
    <property type="entry name" value="Photo_RC_L/M"/>
</dbReference>
<dbReference type="InterPro" id="IPR055265">
    <property type="entry name" value="Photo_RC_L/M_CS"/>
</dbReference>
<dbReference type="InterPro" id="IPR005868">
    <property type="entry name" value="PSII_PsbD/D2"/>
</dbReference>
<dbReference type="NCBIfam" id="TIGR01152">
    <property type="entry name" value="psbD"/>
    <property type="match status" value="1"/>
</dbReference>
<dbReference type="PANTHER" id="PTHR33149:SF12">
    <property type="entry name" value="PHOTOSYSTEM II D2 PROTEIN"/>
    <property type="match status" value="1"/>
</dbReference>
<dbReference type="PANTHER" id="PTHR33149">
    <property type="entry name" value="PHOTOSYSTEM II PROTEIN D1"/>
    <property type="match status" value="1"/>
</dbReference>
<dbReference type="Pfam" id="PF00124">
    <property type="entry name" value="Photo_RC"/>
    <property type="match status" value="1"/>
</dbReference>
<dbReference type="PRINTS" id="PR00256">
    <property type="entry name" value="REACTNCENTRE"/>
</dbReference>
<dbReference type="SUPFAM" id="SSF81483">
    <property type="entry name" value="Bacterial photosystem II reaction centre, L and M subunits"/>
    <property type="match status" value="1"/>
</dbReference>
<dbReference type="PROSITE" id="PS00244">
    <property type="entry name" value="REACTION_CENTER"/>
    <property type="match status" value="1"/>
</dbReference>
<proteinExistence type="inferred from homology"/>
<reference key="1">
    <citation type="journal article" date="2004" name="Plant Physiol.">
        <title>A comparison of rice chloroplast genomes.</title>
        <authorList>
            <person name="Tang J."/>
            <person name="Xia H."/>
            <person name="Cao M."/>
            <person name="Zhang X."/>
            <person name="Zeng W."/>
            <person name="Hu S."/>
            <person name="Tong W."/>
            <person name="Wang J."/>
            <person name="Wang J."/>
            <person name="Yu J."/>
            <person name="Yang H."/>
            <person name="Zhu L."/>
        </authorList>
    </citation>
    <scope>NUCLEOTIDE SEQUENCE [LARGE SCALE GENOMIC DNA]</scope>
    <source>
        <strain>cv. 93-11</strain>
    </source>
</reference>
<name>PSBD_ORYSI</name>
<gene>
    <name evidence="2" type="primary">psbD</name>
    <name type="ORF">9311016</name>
</gene>
<protein>
    <recommendedName>
        <fullName evidence="2">Photosystem II D2 protein</fullName>
        <shortName evidence="2">PSII D2 protein</shortName>
        <ecNumber evidence="2">1.10.3.9</ecNumber>
    </recommendedName>
    <alternativeName>
        <fullName evidence="2">Photosystem Q(A) protein</fullName>
    </alternativeName>
</protein>
<accession>P0C436</accession>
<accession>P12095</accession>
<accession>Q6QY23</accession>
<accession>Q6QY86</accession>
<keyword id="KW-0007">Acetylation</keyword>
<keyword id="KW-0148">Chlorophyll</keyword>
<keyword id="KW-0150">Chloroplast</keyword>
<keyword id="KW-0157">Chromophore</keyword>
<keyword id="KW-0249">Electron transport</keyword>
<keyword id="KW-0408">Iron</keyword>
<keyword id="KW-0460">Magnesium</keyword>
<keyword id="KW-0472">Membrane</keyword>
<keyword id="KW-0479">Metal-binding</keyword>
<keyword id="KW-0560">Oxidoreductase</keyword>
<keyword id="KW-0597">Phosphoprotein</keyword>
<keyword id="KW-0602">Photosynthesis</keyword>
<keyword id="KW-0604">Photosystem II</keyword>
<keyword id="KW-0934">Plastid</keyword>
<keyword id="KW-1185">Reference proteome</keyword>
<keyword id="KW-0793">Thylakoid</keyword>
<keyword id="KW-0812">Transmembrane</keyword>
<keyword id="KW-1133">Transmembrane helix</keyword>
<keyword id="KW-0813">Transport</keyword>